<feature type="chain" id="PRO_0000095793" description="Translation initiation factor IF-1">
    <location>
        <begin position="1"/>
        <end position="72"/>
    </location>
</feature>
<feature type="domain" description="S1-like" evidence="1">
    <location>
        <begin position="1"/>
        <end position="72"/>
    </location>
</feature>
<evidence type="ECO:0000255" key="1">
    <source>
        <dbReference type="HAMAP-Rule" id="MF_00075"/>
    </source>
</evidence>
<keyword id="KW-0963">Cytoplasm</keyword>
<keyword id="KW-0396">Initiation factor</keyword>
<keyword id="KW-0648">Protein biosynthesis</keyword>
<keyword id="KW-1185">Reference proteome</keyword>
<keyword id="KW-0694">RNA-binding</keyword>
<keyword id="KW-0699">rRNA-binding</keyword>
<accession>P61688</accession>
<organism>
    <name type="scientific">Geobacter sulfurreducens (strain ATCC 51573 / DSM 12127 / PCA)</name>
    <dbReference type="NCBI Taxonomy" id="243231"/>
    <lineage>
        <taxon>Bacteria</taxon>
        <taxon>Pseudomonadati</taxon>
        <taxon>Thermodesulfobacteriota</taxon>
        <taxon>Desulfuromonadia</taxon>
        <taxon>Geobacterales</taxon>
        <taxon>Geobacteraceae</taxon>
        <taxon>Geobacter</taxon>
    </lineage>
</organism>
<dbReference type="EMBL" id="AE017180">
    <property type="protein sequence ID" value="AAR35127.1"/>
    <property type="molecule type" value="Genomic_DNA"/>
</dbReference>
<dbReference type="RefSeq" id="NP_952800.1">
    <property type="nucleotide sequence ID" value="NC_002939.5"/>
</dbReference>
<dbReference type="RefSeq" id="WP_010942395.1">
    <property type="nucleotide sequence ID" value="NC_002939.5"/>
</dbReference>
<dbReference type="SMR" id="P61688"/>
<dbReference type="FunCoup" id="P61688">
    <property type="interactions" value="476"/>
</dbReference>
<dbReference type="STRING" id="243231.GSU1750"/>
<dbReference type="EnsemblBacteria" id="AAR35127">
    <property type="protein sequence ID" value="AAR35127"/>
    <property type="gene ID" value="GSU1750"/>
</dbReference>
<dbReference type="KEGG" id="gsu:GSU1750"/>
<dbReference type="PATRIC" id="fig|243231.5.peg.1791"/>
<dbReference type="eggNOG" id="COG0361">
    <property type="taxonomic scope" value="Bacteria"/>
</dbReference>
<dbReference type="HOGENOM" id="CLU_151267_1_0_7"/>
<dbReference type="InParanoid" id="P61688"/>
<dbReference type="OrthoDB" id="9803250at2"/>
<dbReference type="Proteomes" id="UP000000577">
    <property type="component" value="Chromosome"/>
</dbReference>
<dbReference type="GO" id="GO:0005829">
    <property type="term" value="C:cytosol"/>
    <property type="evidence" value="ECO:0000318"/>
    <property type="project" value="GO_Central"/>
</dbReference>
<dbReference type="GO" id="GO:0043022">
    <property type="term" value="F:ribosome binding"/>
    <property type="evidence" value="ECO:0000318"/>
    <property type="project" value="GO_Central"/>
</dbReference>
<dbReference type="GO" id="GO:0019843">
    <property type="term" value="F:rRNA binding"/>
    <property type="evidence" value="ECO:0007669"/>
    <property type="project" value="UniProtKB-UniRule"/>
</dbReference>
<dbReference type="GO" id="GO:0003743">
    <property type="term" value="F:translation initiation factor activity"/>
    <property type="evidence" value="ECO:0007669"/>
    <property type="project" value="UniProtKB-UniRule"/>
</dbReference>
<dbReference type="CDD" id="cd04451">
    <property type="entry name" value="S1_IF1"/>
    <property type="match status" value="1"/>
</dbReference>
<dbReference type="FunFam" id="2.40.50.140:FF:000002">
    <property type="entry name" value="Translation initiation factor IF-1"/>
    <property type="match status" value="1"/>
</dbReference>
<dbReference type="Gene3D" id="2.40.50.140">
    <property type="entry name" value="Nucleic acid-binding proteins"/>
    <property type="match status" value="1"/>
</dbReference>
<dbReference type="HAMAP" id="MF_00075">
    <property type="entry name" value="IF_1"/>
    <property type="match status" value="1"/>
</dbReference>
<dbReference type="InterPro" id="IPR012340">
    <property type="entry name" value="NA-bd_OB-fold"/>
</dbReference>
<dbReference type="InterPro" id="IPR006196">
    <property type="entry name" value="RNA-binding_domain_S1_IF1"/>
</dbReference>
<dbReference type="InterPro" id="IPR003029">
    <property type="entry name" value="S1_domain"/>
</dbReference>
<dbReference type="InterPro" id="IPR004368">
    <property type="entry name" value="TIF_IF1"/>
</dbReference>
<dbReference type="NCBIfam" id="TIGR00008">
    <property type="entry name" value="infA"/>
    <property type="match status" value="1"/>
</dbReference>
<dbReference type="PANTHER" id="PTHR33370">
    <property type="entry name" value="TRANSLATION INITIATION FACTOR IF-1, CHLOROPLASTIC"/>
    <property type="match status" value="1"/>
</dbReference>
<dbReference type="PANTHER" id="PTHR33370:SF1">
    <property type="entry name" value="TRANSLATION INITIATION FACTOR IF-1, CHLOROPLASTIC"/>
    <property type="match status" value="1"/>
</dbReference>
<dbReference type="Pfam" id="PF01176">
    <property type="entry name" value="eIF-1a"/>
    <property type="match status" value="1"/>
</dbReference>
<dbReference type="SMART" id="SM00316">
    <property type="entry name" value="S1"/>
    <property type="match status" value="1"/>
</dbReference>
<dbReference type="SUPFAM" id="SSF50249">
    <property type="entry name" value="Nucleic acid-binding proteins"/>
    <property type="match status" value="1"/>
</dbReference>
<dbReference type="PROSITE" id="PS50832">
    <property type="entry name" value="S1_IF1_TYPE"/>
    <property type="match status" value="1"/>
</dbReference>
<name>IF1_GEOSL</name>
<sequence>MSKEEAIEVEGTVIEPLPNAMFRVELENGHVVLAHISGKMRKYFIKILPGDKVTVELSPYDLTRGRITYRAK</sequence>
<reference key="1">
    <citation type="journal article" date="2003" name="Science">
        <title>Genome of Geobacter sulfurreducens: metal reduction in subsurface environments.</title>
        <authorList>
            <person name="Methe B.A."/>
            <person name="Nelson K.E."/>
            <person name="Eisen J.A."/>
            <person name="Paulsen I.T."/>
            <person name="Nelson W.C."/>
            <person name="Heidelberg J.F."/>
            <person name="Wu D."/>
            <person name="Wu M."/>
            <person name="Ward N.L."/>
            <person name="Beanan M.J."/>
            <person name="Dodson R.J."/>
            <person name="Madupu R."/>
            <person name="Brinkac L.M."/>
            <person name="Daugherty S.C."/>
            <person name="DeBoy R.T."/>
            <person name="Durkin A.S."/>
            <person name="Gwinn M.L."/>
            <person name="Kolonay J.F."/>
            <person name="Sullivan S.A."/>
            <person name="Haft D.H."/>
            <person name="Selengut J."/>
            <person name="Davidsen T.M."/>
            <person name="Zafar N."/>
            <person name="White O."/>
            <person name="Tran B."/>
            <person name="Romero C."/>
            <person name="Forberger H.A."/>
            <person name="Weidman J.F."/>
            <person name="Khouri H.M."/>
            <person name="Feldblyum T.V."/>
            <person name="Utterback T.R."/>
            <person name="Van Aken S.E."/>
            <person name="Lovley D.R."/>
            <person name="Fraser C.M."/>
        </authorList>
    </citation>
    <scope>NUCLEOTIDE SEQUENCE [LARGE SCALE GENOMIC DNA]</scope>
    <source>
        <strain>ATCC 51573 / DSM 12127 / PCA</strain>
    </source>
</reference>
<comment type="function">
    <text evidence="1">One of the essential components for the initiation of protein synthesis. Stabilizes the binding of IF-2 and IF-3 on the 30S subunit to which N-formylmethionyl-tRNA(fMet) subsequently binds. Helps modulate mRNA selection, yielding the 30S pre-initiation complex (PIC). Upon addition of the 50S ribosomal subunit IF-1, IF-2 and IF-3 are released leaving the mature 70S translation initiation complex.</text>
</comment>
<comment type="subunit">
    <text evidence="1">Component of the 30S ribosomal translation pre-initiation complex which assembles on the 30S ribosome in the order IF-2 and IF-3, IF-1 and N-formylmethionyl-tRNA(fMet); mRNA recruitment can occur at any time during PIC assembly.</text>
</comment>
<comment type="subcellular location">
    <subcellularLocation>
        <location evidence="1">Cytoplasm</location>
    </subcellularLocation>
</comment>
<comment type="similarity">
    <text evidence="1">Belongs to the IF-1 family.</text>
</comment>
<protein>
    <recommendedName>
        <fullName evidence="1">Translation initiation factor IF-1</fullName>
    </recommendedName>
</protein>
<proteinExistence type="inferred from homology"/>
<gene>
    <name evidence="1" type="primary">infA</name>
    <name type="ordered locus">GSU1750</name>
</gene>